<keyword id="KW-0251">Elongation factor</keyword>
<keyword id="KW-0342">GTP-binding</keyword>
<keyword id="KW-0496">Mitochondrion</keyword>
<keyword id="KW-0547">Nucleotide-binding</keyword>
<keyword id="KW-0648">Protein biosynthesis</keyword>
<keyword id="KW-0809">Transit peptide</keyword>
<evidence type="ECO:0000255" key="1">
    <source>
        <dbReference type="HAMAP-Rule" id="MF_03061"/>
    </source>
</evidence>
<evidence type="ECO:0000305" key="2"/>
<proteinExistence type="inferred from homology"/>
<gene>
    <name evidence="1" type="primary">MEF1</name>
    <name type="ORF">SCY_3648</name>
</gene>
<protein>
    <recommendedName>
        <fullName evidence="1">Elongation factor G, mitochondrial</fullName>
        <shortName evidence="1">EF-Gmt</shortName>
    </recommendedName>
    <alternativeName>
        <fullName evidence="1">Elongation factor G 1, mitochondrial</fullName>
        <shortName evidence="1">mEF-G 1</shortName>
    </alternativeName>
    <alternativeName>
        <fullName evidence="1">Elongation factor G1</fullName>
    </alternativeName>
</protein>
<name>EFGM_YEAS7</name>
<feature type="transit peptide" description="Mitochondrion" evidence="1">
    <location>
        <begin position="1"/>
        <end position="42"/>
    </location>
</feature>
<feature type="chain" id="PRO_0000385591" description="Elongation factor G, mitochondrial">
    <location>
        <begin position="43"/>
        <end position="761"/>
    </location>
</feature>
<feature type="domain" description="tr-type G">
    <location>
        <begin position="68"/>
        <end position="349"/>
    </location>
</feature>
<feature type="binding site" evidence="1">
    <location>
        <begin position="77"/>
        <end position="84"/>
    </location>
    <ligand>
        <name>GTP</name>
        <dbReference type="ChEBI" id="CHEBI:37565"/>
    </ligand>
</feature>
<feature type="binding site" evidence="1">
    <location>
        <begin position="148"/>
        <end position="152"/>
    </location>
    <ligand>
        <name>GTP</name>
        <dbReference type="ChEBI" id="CHEBI:37565"/>
    </ligand>
</feature>
<feature type="binding site" evidence="1">
    <location>
        <begin position="202"/>
        <end position="205"/>
    </location>
    <ligand>
        <name>GTP</name>
        <dbReference type="ChEBI" id="CHEBI:37565"/>
    </ligand>
</feature>
<reference key="1">
    <citation type="journal article" date="2007" name="Proc. Natl. Acad. Sci. U.S.A.">
        <title>Genome sequencing and comparative analysis of Saccharomyces cerevisiae strain YJM789.</title>
        <authorList>
            <person name="Wei W."/>
            <person name="McCusker J.H."/>
            <person name="Hyman R.W."/>
            <person name="Jones T."/>
            <person name="Ning Y."/>
            <person name="Cao Z."/>
            <person name="Gu Z."/>
            <person name="Bruno D."/>
            <person name="Miranda M."/>
            <person name="Nguyen M."/>
            <person name="Wilhelmy J."/>
            <person name="Komp C."/>
            <person name="Tamse R."/>
            <person name="Wang X."/>
            <person name="Jia P."/>
            <person name="Luedi P."/>
            <person name="Oefner P.J."/>
            <person name="David L."/>
            <person name="Dietrich F.S."/>
            <person name="Li Y."/>
            <person name="Davis R.W."/>
            <person name="Steinmetz L.M."/>
        </authorList>
    </citation>
    <scope>NUCLEOTIDE SEQUENCE [LARGE SCALE GENOMIC DNA]</scope>
    <source>
        <strain>YJM789</strain>
    </source>
</reference>
<dbReference type="EMBL" id="AAFW02000167">
    <property type="protein sequence ID" value="EDN59615.1"/>
    <property type="molecule type" value="Genomic_DNA"/>
</dbReference>
<dbReference type="SMR" id="A7A0X4"/>
<dbReference type="HOGENOM" id="CLU_002794_4_1_1"/>
<dbReference type="UniPathway" id="UPA00345"/>
<dbReference type="Proteomes" id="UP000007060">
    <property type="component" value="Unassembled WGS sequence"/>
</dbReference>
<dbReference type="GO" id="GO:0005739">
    <property type="term" value="C:mitochondrion"/>
    <property type="evidence" value="ECO:0007669"/>
    <property type="project" value="UniProtKB-SubCell"/>
</dbReference>
<dbReference type="GO" id="GO:0005525">
    <property type="term" value="F:GTP binding"/>
    <property type="evidence" value="ECO:0007669"/>
    <property type="project" value="UniProtKB-UniRule"/>
</dbReference>
<dbReference type="GO" id="GO:0003924">
    <property type="term" value="F:GTPase activity"/>
    <property type="evidence" value="ECO:0007669"/>
    <property type="project" value="UniProtKB-UniRule"/>
</dbReference>
<dbReference type="GO" id="GO:0003746">
    <property type="term" value="F:translation elongation factor activity"/>
    <property type="evidence" value="ECO:0007669"/>
    <property type="project" value="UniProtKB-UniRule"/>
</dbReference>
<dbReference type="GO" id="GO:0070125">
    <property type="term" value="P:mitochondrial translational elongation"/>
    <property type="evidence" value="ECO:0007669"/>
    <property type="project" value="UniProtKB-UniRule"/>
</dbReference>
<dbReference type="CDD" id="cd01886">
    <property type="entry name" value="EF-G"/>
    <property type="match status" value="1"/>
</dbReference>
<dbReference type="CDD" id="cd16262">
    <property type="entry name" value="EFG_III"/>
    <property type="match status" value="1"/>
</dbReference>
<dbReference type="CDD" id="cd01434">
    <property type="entry name" value="EFG_mtEFG1_IV"/>
    <property type="match status" value="1"/>
</dbReference>
<dbReference type="CDD" id="cd04097">
    <property type="entry name" value="mtEFG1_C"/>
    <property type="match status" value="1"/>
</dbReference>
<dbReference type="CDD" id="cd04091">
    <property type="entry name" value="mtEFG1_II_like"/>
    <property type="match status" value="1"/>
</dbReference>
<dbReference type="FunFam" id="3.30.230.10:FF:000003">
    <property type="entry name" value="Elongation factor G"/>
    <property type="match status" value="1"/>
</dbReference>
<dbReference type="FunFam" id="3.30.70.870:FF:000001">
    <property type="entry name" value="Elongation factor G"/>
    <property type="match status" value="1"/>
</dbReference>
<dbReference type="FunFam" id="2.40.30.10:FF:000022">
    <property type="entry name" value="Elongation factor G, mitochondrial"/>
    <property type="match status" value="1"/>
</dbReference>
<dbReference type="FunFam" id="3.30.70.240:FF:000015">
    <property type="entry name" value="Elongation factor G, mitochondrial"/>
    <property type="match status" value="1"/>
</dbReference>
<dbReference type="FunFam" id="3.40.50.300:FF:000558">
    <property type="entry name" value="Elongation factor G, mitochondrial"/>
    <property type="match status" value="1"/>
</dbReference>
<dbReference type="Gene3D" id="3.30.230.10">
    <property type="match status" value="1"/>
</dbReference>
<dbReference type="Gene3D" id="3.30.70.240">
    <property type="match status" value="1"/>
</dbReference>
<dbReference type="Gene3D" id="3.30.70.870">
    <property type="entry name" value="Elongation Factor G (Translational Gtpase), domain 3"/>
    <property type="match status" value="1"/>
</dbReference>
<dbReference type="Gene3D" id="3.40.50.300">
    <property type="entry name" value="P-loop containing nucleotide triphosphate hydrolases"/>
    <property type="match status" value="1"/>
</dbReference>
<dbReference type="Gene3D" id="2.40.30.10">
    <property type="entry name" value="Translation factors"/>
    <property type="match status" value="1"/>
</dbReference>
<dbReference type="HAMAP" id="MF_00054_B">
    <property type="entry name" value="EF_G_EF_2_B"/>
    <property type="match status" value="1"/>
</dbReference>
<dbReference type="InterPro" id="IPR041095">
    <property type="entry name" value="EFG_II"/>
</dbReference>
<dbReference type="InterPro" id="IPR009022">
    <property type="entry name" value="EFG_III"/>
</dbReference>
<dbReference type="InterPro" id="IPR035647">
    <property type="entry name" value="EFG_III/V"/>
</dbReference>
<dbReference type="InterPro" id="IPR047872">
    <property type="entry name" value="EFG_IV"/>
</dbReference>
<dbReference type="InterPro" id="IPR035649">
    <property type="entry name" value="EFG_V"/>
</dbReference>
<dbReference type="InterPro" id="IPR000640">
    <property type="entry name" value="EFG_V-like"/>
</dbReference>
<dbReference type="InterPro" id="IPR004161">
    <property type="entry name" value="EFTu-like_2"/>
</dbReference>
<dbReference type="InterPro" id="IPR031157">
    <property type="entry name" value="G_TR_CS"/>
</dbReference>
<dbReference type="InterPro" id="IPR027417">
    <property type="entry name" value="P-loop_NTPase"/>
</dbReference>
<dbReference type="InterPro" id="IPR020568">
    <property type="entry name" value="Ribosomal_Su5_D2-typ_SF"/>
</dbReference>
<dbReference type="InterPro" id="IPR014721">
    <property type="entry name" value="Ribsml_uS5_D2-typ_fold_subgr"/>
</dbReference>
<dbReference type="InterPro" id="IPR005225">
    <property type="entry name" value="Small_GTP-bd"/>
</dbReference>
<dbReference type="InterPro" id="IPR000795">
    <property type="entry name" value="T_Tr_GTP-bd_dom"/>
</dbReference>
<dbReference type="InterPro" id="IPR009000">
    <property type="entry name" value="Transl_B-barrel_sf"/>
</dbReference>
<dbReference type="InterPro" id="IPR004540">
    <property type="entry name" value="Transl_elong_EFG/EF2"/>
</dbReference>
<dbReference type="InterPro" id="IPR005517">
    <property type="entry name" value="Transl_elong_EFG/EF2_IV"/>
</dbReference>
<dbReference type="NCBIfam" id="TIGR00484">
    <property type="entry name" value="EF-G"/>
    <property type="match status" value="1"/>
</dbReference>
<dbReference type="NCBIfam" id="NF009381">
    <property type="entry name" value="PRK12740.1-5"/>
    <property type="match status" value="1"/>
</dbReference>
<dbReference type="NCBIfam" id="TIGR00231">
    <property type="entry name" value="small_GTP"/>
    <property type="match status" value="1"/>
</dbReference>
<dbReference type="PANTHER" id="PTHR43636">
    <property type="entry name" value="ELONGATION FACTOR G, MITOCHONDRIAL"/>
    <property type="match status" value="1"/>
</dbReference>
<dbReference type="PANTHER" id="PTHR43636:SF2">
    <property type="entry name" value="ELONGATION FACTOR G, MITOCHONDRIAL"/>
    <property type="match status" value="1"/>
</dbReference>
<dbReference type="Pfam" id="PF00679">
    <property type="entry name" value="EFG_C"/>
    <property type="match status" value="1"/>
</dbReference>
<dbReference type="Pfam" id="PF14492">
    <property type="entry name" value="EFG_III"/>
    <property type="match status" value="1"/>
</dbReference>
<dbReference type="Pfam" id="PF03764">
    <property type="entry name" value="EFG_IV"/>
    <property type="match status" value="1"/>
</dbReference>
<dbReference type="Pfam" id="PF00009">
    <property type="entry name" value="GTP_EFTU"/>
    <property type="match status" value="1"/>
</dbReference>
<dbReference type="Pfam" id="PF03144">
    <property type="entry name" value="GTP_EFTU_D2"/>
    <property type="match status" value="1"/>
</dbReference>
<dbReference type="PRINTS" id="PR00315">
    <property type="entry name" value="ELONGATNFCT"/>
</dbReference>
<dbReference type="SMART" id="SM00838">
    <property type="entry name" value="EFG_C"/>
    <property type="match status" value="1"/>
</dbReference>
<dbReference type="SMART" id="SM00889">
    <property type="entry name" value="EFG_IV"/>
    <property type="match status" value="1"/>
</dbReference>
<dbReference type="SUPFAM" id="SSF54980">
    <property type="entry name" value="EF-G C-terminal domain-like"/>
    <property type="match status" value="2"/>
</dbReference>
<dbReference type="SUPFAM" id="SSF52540">
    <property type="entry name" value="P-loop containing nucleoside triphosphate hydrolases"/>
    <property type="match status" value="1"/>
</dbReference>
<dbReference type="SUPFAM" id="SSF54211">
    <property type="entry name" value="Ribosomal protein S5 domain 2-like"/>
    <property type="match status" value="1"/>
</dbReference>
<dbReference type="SUPFAM" id="SSF50447">
    <property type="entry name" value="Translation proteins"/>
    <property type="match status" value="1"/>
</dbReference>
<dbReference type="PROSITE" id="PS00301">
    <property type="entry name" value="G_TR_1"/>
    <property type="match status" value="1"/>
</dbReference>
<dbReference type="PROSITE" id="PS51722">
    <property type="entry name" value="G_TR_2"/>
    <property type="match status" value="1"/>
</dbReference>
<accession>A7A0X4</accession>
<organism>
    <name type="scientific">Saccharomyces cerevisiae (strain YJM789)</name>
    <name type="common">Baker's yeast</name>
    <dbReference type="NCBI Taxonomy" id="307796"/>
    <lineage>
        <taxon>Eukaryota</taxon>
        <taxon>Fungi</taxon>
        <taxon>Dikarya</taxon>
        <taxon>Ascomycota</taxon>
        <taxon>Saccharomycotina</taxon>
        <taxon>Saccharomycetes</taxon>
        <taxon>Saccharomycetales</taxon>
        <taxon>Saccharomycetaceae</taxon>
        <taxon>Saccharomyces</taxon>
    </lineage>
</organism>
<comment type="function">
    <text evidence="1">Mitochondrial GTPase that catalyzes the GTP-dependent ribosomal translocation step during translation elongation. During this step, the ribosome changes from the pre-translocational (PRE) to the post-translocational (POST) state as the newly formed A-site-bound peptidyl-tRNA and P-site-bound deacylated tRNA move to the P and E sites, respectively. Catalyzes the coordinated movement of the two tRNA molecules, the mRNA and conformational changes in the ribosome.</text>
</comment>
<comment type="pathway">
    <text evidence="1">Protein biosynthesis; polypeptide chain elongation.</text>
</comment>
<comment type="subcellular location">
    <subcellularLocation>
        <location evidence="1">Mitochondrion</location>
    </subcellularLocation>
</comment>
<comment type="PTM">
    <text evidence="1">The precursor is processed in two steps involving mitochondrial intermediate peptidase (MIP) and mitochondrial processing peptidase (MPP).</text>
</comment>
<comment type="similarity">
    <text evidence="2">Belongs to the TRAFAC class translation factor GTPase superfamily. Classic translation factor GTPase family. EF-G/EF-2 subfamily.</text>
</comment>
<sequence length="761" mass="84616">MSVQKMMRVPRKMVGGRIPFFTCSKVFSGFSRRSFHESPLARSTYEEEKVLVDEIKQKLTPDDIERCNKLRNIGISAHIDSGKTTFTERVLYYTKRIKAIHEVRGRDNVGAKMDSMDLEREKGITIQSAATYCSWDKEGKNYHFNLIDTPGHIDFTIEVERALRVLDGAVLVVCAVSGVQSQTVTVDRQMRRYNVPRVTFINKMDRMGSDPFRAIEQLNSKLKIPAAAVQIPIGSESSLSGVVDLINRVAIYNKGDNGEIIEKGPVPENLKPLMEEKRQLLIETLADVDDEMAEMFLEEKEPTTQQIKDAIRRSTIARSFTPVLMGSALANTGIQPVLDAIVDYLPNPSEVLNTALDVSNNEAKVNLVPAVQQPFVGLAFKLEEGKYGQLTYVRVYQGRLRKGNYITNVKTGKKVKVARLVRMHSSEMEDVDEVGSGEICATFGIDCASGDTFTDGSVQYSMSSMYVPDAVVSLSITPNSKDASNFSKALNRFQKEDPTFRVKFDPESKETIISGMGELHLEIYVERMRREYNVDCVTGKPQVSYRESITIPADFDYTHKKQSGGAGQYGRVIGTLSPVDDITKGNIFETAIVGGRIPDKYLAACGKGFEEVCEKGPLIGHRVLDVKMLINDGAIHAVDSNELSFKTATMSAFRDAFLRAQPVIMEPIMNVSVTSPNEFQGNVIGLLNKLQAVIQDTENGHDEFTLKAECALSTMFGFATSLRASTQGKGEFSLEFSHYAPTAPHVQKELISEFQKKQAKK</sequence>